<gene>
    <name type="primary">GEP3</name>
    <name type="synonym">AIM40</name>
    <name type="synonym">FMP48</name>
    <name type="ORF">AWRI796_4584</name>
</gene>
<comment type="function">
    <text evidence="1">Interacts genetically with prohibitins and thus may be involved in the mitochondrial lipid metabolism.</text>
</comment>
<comment type="subcellular location">
    <subcellularLocation>
        <location evidence="1">Mitochondrion</location>
    </subcellularLocation>
</comment>
<comment type="similarity">
    <text evidence="3">Belongs to the TRAFAC class YlqF/YawG GTPase family. GEP3 subfamily.</text>
</comment>
<protein>
    <recommendedName>
        <fullName>Genetic interactor of prohibitins 3, mitochondrial</fullName>
    </recommendedName>
    <alternativeName>
        <fullName>Altered inheritance of mitochondria protein 40</fullName>
    </alternativeName>
    <alternativeName>
        <fullName>Found in mitochondrial proteome protein 38</fullName>
    </alternativeName>
</protein>
<sequence>MLNLCHALRGVRQFSCSVIVKVKCASCSIKLQDQDPSKPGYYTKPKSLPDSKLNPDLQDLKYLLFSQDIQLSKQAIQNDPDLKTKRDLLLRVICKRCSNALHHNNYNPEEFPESTLNDILNYVPRGSNVMHIVPFVEFPLHLDPNVLKRNDLETTLVLTKSDQVFKDKNAVSKKVPIFMKQFLKNTLRIDSNKTFAISALKNWNISMFYNYFKNYTYLLGNPNVGKSTLINTLLQKYLGYKVKIDSTGKINSPSEEVMQEAFTNPKNFFKIQAAGVSHIPNLTRSVQAYQVGGKILFDLPGYSTSTSRLRLEEPIDERWLQRLRKTDLFNRKHIKQKTYESMKGTSQGGCYTVGGIFYLVPPKGSINQIVKYIPGPSKTFKNIEKGIDVFNSCNSSSGTHPLSRYCGIKSVICEKSQYKRYAIPPFIGSIEIVLKDIGYILLRTTGRYEFKGLHEIWIPRGIQVGIREPLENLIESGYQRYIETNGKESSCPRDRPIISSLYEMAPDEADTLNAVKKSYLEKTEKDLSARRFVDDDPYDLVQHLRKKKESLLVLPMVRLAVHLVAPISSNAHVNMNVSKLKRKLGTKYIQKRIYRK</sequence>
<name>GEP3_YEASA</name>
<dbReference type="EMBL" id="ADVS01000045">
    <property type="protein sequence ID" value="EGA72952.1"/>
    <property type="molecule type" value="Genomic_DNA"/>
</dbReference>
<dbReference type="SMR" id="E7KI83"/>
<dbReference type="HOGENOM" id="CLU_457574_0_0_1"/>
<dbReference type="OMA" id="IIPPFYG"/>
<dbReference type="OrthoDB" id="1696305at2759"/>
<dbReference type="GO" id="GO:0005739">
    <property type="term" value="C:mitochondrion"/>
    <property type="evidence" value="ECO:0007669"/>
    <property type="project" value="UniProtKB-SubCell"/>
</dbReference>
<dbReference type="GO" id="GO:0005525">
    <property type="term" value="F:GTP binding"/>
    <property type="evidence" value="ECO:0007669"/>
    <property type="project" value="InterPro"/>
</dbReference>
<dbReference type="CDD" id="cd01855">
    <property type="entry name" value="YqeH"/>
    <property type="match status" value="1"/>
</dbReference>
<dbReference type="Gene3D" id="3.40.50.300">
    <property type="entry name" value="P-loop containing nucleotide triphosphate hydrolases"/>
    <property type="match status" value="1"/>
</dbReference>
<dbReference type="InterPro" id="IPR030378">
    <property type="entry name" value="G_CP_dom"/>
</dbReference>
<dbReference type="InterPro" id="IPR006073">
    <property type="entry name" value="GTP-bd"/>
</dbReference>
<dbReference type="InterPro" id="IPR050896">
    <property type="entry name" value="Mito_lipid_metab_GTPase"/>
</dbReference>
<dbReference type="InterPro" id="IPR027417">
    <property type="entry name" value="P-loop_NTPase"/>
</dbReference>
<dbReference type="PANTHER" id="PTHR46434">
    <property type="entry name" value="GENETIC INTERACTOR OF PROHIBITINS 3, MITOCHONDRIAL"/>
    <property type="match status" value="1"/>
</dbReference>
<dbReference type="PANTHER" id="PTHR46434:SF1">
    <property type="entry name" value="GENETIC INTERACTOR OF PROHIBITINS 3, MITOCHONDRIAL"/>
    <property type="match status" value="1"/>
</dbReference>
<dbReference type="Pfam" id="PF01926">
    <property type="entry name" value="MMR_HSR1"/>
    <property type="match status" value="1"/>
</dbReference>
<dbReference type="SUPFAM" id="SSF52540">
    <property type="entry name" value="P-loop containing nucleoside triphosphate hydrolases"/>
    <property type="match status" value="1"/>
</dbReference>
<dbReference type="PROSITE" id="PS51721">
    <property type="entry name" value="G_CP"/>
    <property type="match status" value="1"/>
</dbReference>
<reference key="1">
    <citation type="journal article" date="2011" name="PLoS Genet.">
        <title>Whole-genome comparison reveals novel genetic elements that characterize the genome of industrial strains of Saccharomyces cerevisiae.</title>
        <authorList>
            <person name="Borneman A.R."/>
            <person name="Desany B.A."/>
            <person name="Riches D."/>
            <person name="Affourtit J.P."/>
            <person name="Forgan A.H."/>
            <person name="Pretorius I.S."/>
            <person name="Egholm M."/>
            <person name="Chambers P.J."/>
        </authorList>
    </citation>
    <scope>NUCLEOTIDE SEQUENCE [LARGE SCALE GENOMIC DNA]</scope>
    <source>
        <strain>AWRI796</strain>
    </source>
</reference>
<feature type="transit peptide" description="Mitochondrion" evidence="2">
    <location>
        <begin position="1"/>
        <end position="21"/>
    </location>
</feature>
<feature type="chain" id="PRO_0000409647" description="Genetic interactor of prohibitins 3, mitochondrial">
    <location>
        <begin position="22"/>
        <end position="596"/>
    </location>
</feature>
<feature type="domain" description="CP-type G" evidence="3">
    <location>
        <begin position="113"/>
        <end position="305"/>
    </location>
</feature>
<evidence type="ECO:0000250" key="1"/>
<evidence type="ECO:0000255" key="2"/>
<evidence type="ECO:0000255" key="3">
    <source>
        <dbReference type="PROSITE-ProRule" id="PRU01058"/>
    </source>
</evidence>
<accession>E7KI83</accession>
<proteinExistence type="inferred from homology"/>
<keyword id="KW-0496">Mitochondrion</keyword>
<keyword id="KW-0809">Transit peptide</keyword>
<organism>
    <name type="scientific">Saccharomyces cerevisiae (strain AWRI796)</name>
    <name type="common">Baker's yeast</name>
    <dbReference type="NCBI Taxonomy" id="764097"/>
    <lineage>
        <taxon>Eukaryota</taxon>
        <taxon>Fungi</taxon>
        <taxon>Dikarya</taxon>
        <taxon>Ascomycota</taxon>
        <taxon>Saccharomycotina</taxon>
        <taxon>Saccharomycetes</taxon>
        <taxon>Saccharomycetales</taxon>
        <taxon>Saccharomycetaceae</taxon>
        <taxon>Saccharomyces</taxon>
    </lineage>
</organism>